<protein>
    <recommendedName>
        <fullName evidence="3">Short cationic peptide-4c</fullName>
        <shortName evidence="3">SCP-4c</shortName>
    </recommendedName>
    <alternativeName>
        <fullName evidence="2">Short cationic peptide-4e</fullName>
        <shortName evidence="2">SCP-4e</shortName>
    </alternativeName>
    <alternativeName>
        <fullName evidence="3">Truncated variant of Cupiennin 4 family</fullName>
    </alternativeName>
</protein>
<feature type="peptide" id="PRO_0000421217" description="Short cationic peptide-4c" evidence="1">
    <location>
        <begin position="1"/>
        <end position="20"/>
    </location>
</feature>
<feature type="modified residue" description="Glutamic acid 1-amide" evidence="1">
    <location>
        <position position="20"/>
    </location>
</feature>
<evidence type="ECO:0000269" key="1">
    <source>
    </source>
</evidence>
<evidence type="ECO:0000303" key="2">
    <source>
    </source>
</evidence>
<evidence type="ECO:0000303" key="3">
    <source ref="2"/>
</evidence>
<evidence type="ECO:0000305" key="4"/>
<evidence type="ECO:0000305" key="5">
    <source>
    </source>
</evidence>
<accession>B3EWW0</accession>
<keyword id="KW-0027">Amidation</keyword>
<keyword id="KW-0903">Direct protein sequencing</keyword>
<keyword id="KW-0964">Secreted</keyword>
<keyword id="KW-0800">Toxin</keyword>
<comment type="subcellular location">
    <subcellularLocation>
        <location evidence="1">Secreted</location>
    </subcellularLocation>
</comment>
<comment type="tissue specificity">
    <text evidence="5">Expressed by the venom gland.</text>
</comment>
<comment type="mass spectrometry" mass="2281.346" method="Electrospray" evidence="1"/>
<comment type="similarity">
    <text evidence="4">Belongs to the cationic peptide 04 (cupiennin) family. 04 subfamily.</text>
</comment>
<proteinExistence type="evidence at protein level"/>
<name>TXS4C_CUPSA</name>
<reference key="1">
    <citation type="journal article" date="2012" name="FEBS J.">
        <title>Multicomponent venom of the spider Cupiennius salei: a bioanalytical investigation applying different strategies.</title>
        <authorList>
            <person name="Trachsel C."/>
            <person name="Siegemund D."/>
            <person name="Kampfer U."/>
            <person name="Kopp L.S."/>
            <person name="Buhr C."/>
            <person name="Grossmann J."/>
            <person name="Luthi C."/>
            <person name="Cunningham M."/>
            <person name="Nentwig W."/>
            <person name="Kuhn-Nentwig L."/>
            <person name="Schurch S."/>
            <person name="Schaller J."/>
        </authorList>
    </citation>
    <scope>PROTEIN SEQUENCE</scope>
    <scope>MASS SPECTROMETRY</scope>
    <scope>AMIDATION AT GLU-20</scope>
    <source>
        <tissue>Venom</tissue>
    </source>
</reference>
<reference key="2">
    <citation type="unpublished observations" date="2015-06">
        <authorList>
            <person name="Kuhn-Nentwig L."/>
            <person name="Gohel T."/>
        </authorList>
    </citation>
    <scope>NOMENCLATURE</scope>
</reference>
<organism>
    <name type="scientific">Cupiennius salei</name>
    <name type="common">American wandering spider</name>
    <dbReference type="NCBI Taxonomy" id="6928"/>
    <lineage>
        <taxon>Eukaryota</taxon>
        <taxon>Metazoa</taxon>
        <taxon>Ecdysozoa</taxon>
        <taxon>Arthropoda</taxon>
        <taxon>Chelicerata</taxon>
        <taxon>Arachnida</taxon>
        <taxon>Araneae</taxon>
        <taxon>Araneomorphae</taxon>
        <taxon>Entelegynae</taxon>
        <taxon>Lycosoidea</taxon>
        <taxon>Ctenidae</taxon>
        <taxon>Cupiennius</taxon>
    </lineage>
</organism>
<dbReference type="GO" id="GO:0005576">
    <property type="term" value="C:extracellular region"/>
    <property type="evidence" value="ECO:0007669"/>
    <property type="project" value="UniProtKB-SubCell"/>
</dbReference>
<dbReference type="GO" id="GO:0090729">
    <property type="term" value="F:toxin activity"/>
    <property type="evidence" value="ECO:0007669"/>
    <property type="project" value="UniProtKB-KW"/>
</dbReference>
<dbReference type="GO" id="GO:0042742">
    <property type="term" value="P:defense response to bacterium"/>
    <property type="evidence" value="ECO:0007669"/>
    <property type="project" value="InterPro"/>
</dbReference>
<dbReference type="InterPro" id="IPR035164">
    <property type="entry name" value="Cupiennin"/>
</dbReference>
<dbReference type="Pfam" id="PF17563">
    <property type="entry name" value="Cu"/>
    <property type="match status" value="1"/>
</dbReference>
<sequence length="20" mass="2284">FLAKKVAKKLVSHVAQKQME</sequence>